<proteinExistence type="inferred from homology"/>
<sequence length="239" mass="26635">MIELIPAIDIIDGKCVRLSQGDYNTQKVYNENPVEVAKEFEAHGIHRLHIVDLDGAVSRHVVNYRVLDQIASRTSLVIDFGGGIKTDEDLVIAFDNGAQMVTLGSVAVKNPGLFKKWLEQYGNEKIILGADVKENKISVNGWKEESQQQLIPFLKDYTKEGVFKVLCTDISRDGMLQGPSVELYQQILKEFPNMHLIASGGVSCIQDIIDLEIAKVPAVVFGKALYEGKITLKDLNRFM</sequence>
<feature type="chain" id="PRO_1000063186" description="1-(5-phosphoribosyl)-5-[(5-phosphoribosylamino)methylideneamino] imidazole-4-carboxamide isomerase">
    <location>
        <begin position="1"/>
        <end position="239"/>
    </location>
</feature>
<feature type="active site" description="Proton acceptor" evidence="1">
    <location>
        <position position="9"/>
    </location>
</feature>
<feature type="active site" description="Proton donor" evidence="1">
    <location>
        <position position="131"/>
    </location>
</feature>
<dbReference type="EC" id="5.3.1.16" evidence="1"/>
<dbReference type="EMBL" id="CP000139">
    <property type="protein sequence ID" value="ABR41455.1"/>
    <property type="molecule type" value="Genomic_DNA"/>
</dbReference>
<dbReference type="RefSeq" id="WP_005841209.1">
    <property type="nucleotide sequence ID" value="NZ_JANSWM010000043.1"/>
</dbReference>
<dbReference type="SMR" id="A6L6Z1"/>
<dbReference type="STRING" id="435590.BVU_3852"/>
<dbReference type="PaxDb" id="435590-BVU_3852"/>
<dbReference type="GeneID" id="5304811"/>
<dbReference type="KEGG" id="bvu:BVU_3852"/>
<dbReference type="eggNOG" id="COG0106">
    <property type="taxonomic scope" value="Bacteria"/>
</dbReference>
<dbReference type="HOGENOM" id="CLU_048577_1_2_10"/>
<dbReference type="BioCyc" id="BVUL435590:G1G59-3988-MONOMER"/>
<dbReference type="UniPathway" id="UPA00031">
    <property type="reaction ID" value="UER00009"/>
</dbReference>
<dbReference type="Proteomes" id="UP000002861">
    <property type="component" value="Chromosome"/>
</dbReference>
<dbReference type="GO" id="GO:0005737">
    <property type="term" value="C:cytoplasm"/>
    <property type="evidence" value="ECO:0007669"/>
    <property type="project" value="UniProtKB-SubCell"/>
</dbReference>
<dbReference type="GO" id="GO:0003949">
    <property type="term" value="F:1-(5-phosphoribosyl)-5-[(5-phosphoribosylamino)methylideneamino]imidazole-4-carboxamide isomerase activity"/>
    <property type="evidence" value="ECO:0007669"/>
    <property type="project" value="UniProtKB-UniRule"/>
</dbReference>
<dbReference type="GO" id="GO:0000105">
    <property type="term" value="P:L-histidine biosynthetic process"/>
    <property type="evidence" value="ECO:0007669"/>
    <property type="project" value="UniProtKB-UniRule"/>
</dbReference>
<dbReference type="GO" id="GO:0000162">
    <property type="term" value="P:L-tryptophan biosynthetic process"/>
    <property type="evidence" value="ECO:0007669"/>
    <property type="project" value="TreeGrafter"/>
</dbReference>
<dbReference type="CDD" id="cd04732">
    <property type="entry name" value="HisA"/>
    <property type="match status" value="1"/>
</dbReference>
<dbReference type="FunFam" id="3.20.20.70:FF:000009">
    <property type="entry name" value="1-(5-phosphoribosyl)-5-[(5-phosphoribosylamino)methylideneamino] imidazole-4-carboxamide isomerase"/>
    <property type="match status" value="1"/>
</dbReference>
<dbReference type="Gene3D" id="3.20.20.70">
    <property type="entry name" value="Aldolase class I"/>
    <property type="match status" value="1"/>
</dbReference>
<dbReference type="HAMAP" id="MF_01014">
    <property type="entry name" value="HisA"/>
    <property type="match status" value="1"/>
</dbReference>
<dbReference type="InterPro" id="IPR013785">
    <property type="entry name" value="Aldolase_TIM"/>
</dbReference>
<dbReference type="InterPro" id="IPR006062">
    <property type="entry name" value="His_biosynth"/>
</dbReference>
<dbReference type="InterPro" id="IPR006063">
    <property type="entry name" value="HisA_bact_arch"/>
</dbReference>
<dbReference type="InterPro" id="IPR044524">
    <property type="entry name" value="Isoase_HisA-like"/>
</dbReference>
<dbReference type="InterPro" id="IPR023016">
    <property type="entry name" value="Isoase_HisA-like_bact"/>
</dbReference>
<dbReference type="InterPro" id="IPR011060">
    <property type="entry name" value="RibuloseP-bd_barrel"/>
</dbReference>
<dbReference type="NCBIfam" id="TIGR00007">
    <property type="entry name" value="1-(5-phosphoribosyl)-5-[(5-phosphoribosylamino)methylideneamino]imidazole-4-carboxamide isomerase"/>
    <property type="match status" value="1"/>
</dbReference>
<dbReference type="PANTHER" id="PTHR43090">
    <property type="entry name" value="1-(5-PHOSPHORIBOSYL)-5-[(5-PHOSPHORIBOSYLAMINO)METHYLIDENEAMINO] IMIDAZOLE-4-CARBOXAMIDE ISOMERASE"/>
    <property type="match status" value="1"/>
</dbReference>
<dbReference type="PANTHER" id="PTHR43090:SF2">
    <property type="entry name" value="1-(5-PHOSPHORIBOSYL)-5-[(5-PHOSPHORIBOSYLAMINO)METHYLIDENEAMINO] IMIDAZOLE-4-CARBOXAMIDE ISOMERASE"/>
    <property type="match status" value="1"/>
</dbReference>
<dbReference type="Pfam" id="PF00977">
    <property type="entry name" value="His_biosynth"/>
    <property type="match status" value="1"/>
</dbReference>
<dbReference type="SUPFAM" id="SSF51366">
    <property type="entry name" value="Ribulose-phoshate binding barrel"/>
    <property type="match status" value="1"/>
</dbReference>
<accession>A6L6Z1</accession>
<organism>
    <name type="scientific">Phocaeicola vulgatus (strain ATCC 8482 / DSM 1447 / JCM 5826 / CCUG 4940 / NBRC 14291 / NCTC 11154)</name>
    <name type="common">Bacteroides vulgatus</name>
    <dbReference type="NCBI Taxonomy" id="435590"/>
    <lineage>
        <taxon>Bacteria</taxon>
        <taxon>Pseudomonadati</taxon>
        <taxon>Bacteroidota</taxon>
        <taxon>Bacteroidia</taxon>
        <taxon>Bacteroidales</taxon>
        <taxon>Bacteroidaceae</taxon>
        <taxon>Phocaeicola</taxon>
    </lineage>
</organism>
<gene>
    <name evidence="1" type="primary">hisA</name>
    <name type="ordered locus">BVU_3852</name>
</gene>
<evidence type="ECO:0000255" key="1">
    <source>
        <dbReference type="HAMAP-Rule" id="MF_01014"/>
    </source>
</evidence>
<name>HIS4_PHOV8</name>
<keyword id="KW-0028">Amino-acid biosynthesis</keyword>
<keyword id="KW-0963">Cytoplasm</keyword>
<keyword id="KW-0368">Histidine biosynthesis</keyword>
<keyword id="KW-0413">Isomerase</keyword>
<protein>
    <recommendedName>
        <fullName evidence="1">1-(5-phosphoribosyl)-5-[(5-phosphoribosylamino)methylideneamino] imidazole-4-carboxamide isomerase</fullName>
        <ecNumber evidence="1">5.3.1.16</ecNumber>
    </recommendedName>
    <alternativeName>
        <fullName evidence="1">Phosphoribosylformimino-5-aminoimidazole carboxamide ribotide isomerase</fullName>
    </alternativeName>
</protein>
<comment type="catalytic activity">
    <reaction evidence="1">
        <text>1-(5-phospho-beta-D-ribosyl)-5-[(5-phospho-beta-D-ribosylamino)methylideneamino]imidazole-4-carboxamide = 5-[(5-phospho-1-deoxy-D-ribulos-1-ylimino)methylamino]-1-(5-phospho-beta-D-ribosyl)imidazole-4-carboxamide</text>
        <dbReference type="Rhea" id="RHEA:15469"/>
        <dbReference type="ChEBI" id="CHEBI:58435"/>
        <dbReference type="ChEBI" id="CHEBI:58525"/>
        <dbReference type="EC" id="5.3.1.16"/>
    </reaction>
</comment>
<comment type="pathway">
    <text evidence="1">Amino-acid biosynthesis; L-histidine biosynthesis; L-histidine from 5-phospho-alpha-D-ribose 1-diphosphate: step 4/9.</text>
</comment>
<comment type="subcellular location">
    <subcellularLocation>
        <location evidence="1">Cytoplasm</location>
    </subcellularLocation>
</comment>
<comment type="similarity">
    <text evidence="1">Belongs to the HisA/HisF family.</text>
</comment>
<reference key="1">
    <citation type="journal article" date="2007" name="PLoS Biol.">
        <title>Evolution of symbiotic bacteria in the distal human intestine.</title>
        <authorList>
            <person name="Xu J."/>
            <person name="Mahowald M.A."/>
            <person name="Ley R.E."/>
            <person name="Lozupone C.A."/>
            <person name="Hamady M."/>
            <person name="Martens E.C."/>
            <person name="Henrissat B."/>
            <person name="Coutinho P.M."/>
            <person name="Minx P."/>
            <person name="Latreille P."/>
            <person name="Cordum H."/>
            <person name="Van Brunt A."/>
            <person name="Kim K."/>
            <person name="Fulton R.S."/>
            <person name="Fulton L.A."/>
            <person name="Clifton S.W."/>
            <person name="Wilson R.K."/>
            <person name="Knight R.D."/>
            <person name="Gordon J.I."/>
        </authorList>
    </citation>
    <scope>NUCLEOTIDE SEQUENCE [LARGE SCALE GENOMIC DNA]</scope>
    <source>
        <strain>ATCC 8482 / DSM 1447 / JCM 5826 / CCUG 4940 / NBRC 14291 / NCTC 11154</strain>
    </source>
</reference>